<accession>P95678</accession>
<proteinExistence type="evidence at protein level"/>
<name>CH60_RHOCA</name>
<organism>
    <name type="scientific">Rhodobacter capsulatus</name>
    <name type="common">Rhodopseudomonas capsulata</name>
    <dbReference type="NCBI Taxonomy" id="1061"/>
    <lineage>
        <taxon>Bacteria</taxon>
        <taxon>Pseudomonadati</taxon>
        <taxon>Pseudomonadota</taxon>
        <taxon>Alphaproteobacteria</taxon>
        <taxon>Rhodobacterales</taxon>
        <taxon>Rhodobacter group</taxon>
        <taxon>Rhodobacter</taxon>
    </lineage>
</organism>
<reference key="1">
    <citation type="journal article" date="1996" name="Arch. Microbiol.">
        <title>Molecular analysis of the Rhodobacter capsulatus chaperonin (groESL) operon: purification and characterization of Cpn60.</title>
        <authorList>
            <person name="Hubner P."/>
            <person name="Dame G."/>
            <person name="Sandmeier U."/>
            <person name="Vandekerckhove J."/>
            <person name="Beyer P."/>
            <person name="Tadros M.H."/>
        </authorList>
    </citation>
    <scope>NUCLEOTIDE SEQUENCE [GENOMIC DNA]</scope>
    <scope>PARTIAL PROTEIN SEQUENCE</scope>
    <source>
        <strain>ATCC 33303 / B10</strain>
    </source>
</reference>
<sequence>MAAKEVKFSTDARDRMLKGVNILADAVKVTLGPKGRNVVIEKSFGAPRITKDGVSVAKEIELADKFENMGAQMVKEVASRTNDEAGDGTTTATVLAQAIVREGMKAVAAGMNPMDLKRGIDLATTTVVEAIKAAARPVKDSDEVAQVGTISANGEAQIGRFIADASQKVGNEGVITVEENKGMDTEVEVVEGMQFDRGYLSPYFVTNPDKMIADLEDAYILLHEKKLSSLQPMVPLLEAVIQSTRPLIIVAEDVEGEALATLVVNKLRGGLKIAAVKAPGFGDRRKAMLQDIAILTGGQVISDDLGMKLENVTLDMLGRAKKVTISKENTTIVDGHGDKAEINARVAHIRTQIEETTSDYDREKLQERVAKLAGGVAVIRVGGMTEVEVKERKDRVDDALNATRAAVQEGIIVGGGVALVQAAKKLNDLTGANSDQDAGISIVRRALEAPLRQIAENAGVDGAVVAGKVRESADPAFGFNAQTEEYGDMFGFGVIDPAKVTRTALEDAASIAGLLITTECMIAEKPEPKAAPAGGMGGMGGMDMM</sequence>
<feature type="chain" id="PRO_0000063514" description="Chaperonin GroEL">
    <location>
        <begin position="1"/>
        <end position="545"/>
    </location>
</feature>
<feature type="binding site" evidence="1">
    <location>
        <begin position="30"/>
        <end position="33"/>
    </location>
    <ligand>
        <name>ATP</name>
        <dbReference type="ChEBI" id="CHEBI:30616"/>
    </ligand>
</feature>
<feature type="binding site" evidence="1">
    <location>
        <position position="51"/>
    </location>
    <ligand>
        <name>ATP</name>
        <dbReference type="ChEBI" id="CHEBI:30616"/>
    </ligand>
</feature>
<feature type="binding site" evidence="1">
    <location>
        <begin position="87"/>
        <end position="91"/>
    </location>
    <ligand>
        <name>ATP</name>
        <dbReference type="ChEBI" id="CHEBI:30616"/>
    </ligand>
</feature>
<feature type="binding site" evidence="1">
    <location>
        <position position="415"/>
    </location>
    <ligand>
        <name>ATP</name>
        <dbReference type="ChEBI" id="CHEBI:30616"/>
    </ligand>
</feature>
<feature type="binding site" evidence="1">
    <location>
        <position position="496"/>
    </location>
    <ligand>
        <name>ATP</name>
        <dbReference type="ChEBI" id="CHEBI:30616"/>
    </ligand>
</feature>
<gene>
    <name evidence="1" type="primary">groEL</name>
    <name evidence="1" type="synonym">groL</name>
    <name type="synonym">mopA</name>
</gene>
<evidence type="ECO:0000255" key="1">
    <source>
        <dbReference type="HAMAP-Rule" id="MF_00600"/>
    </source>
</evidence>
<dbReference type="EC" id="5.6.1.7" evidence="1"/>
<dbReference type="EMBL" id="S82593">
    <property type="protein sequence ID" value="AAB37532.1"/>
    <property type="molecule type" value="Genomic_DNA"/>
</dbReference>
<dbReference type="SMR" id="P95678"/>
<dbReference type="GO" id="GO:0005737">
    <property type="term" value="C:cytoplasm"/>
    <property type="evidence" value="ECO:0007669"/>
    <property type="project" value="UniProtKB-SubCell"/>
</dbReference>
<dbReference type="GO" id="GO:0005524">
    <property type="term" value="F:ATP binding"/>
    <property type="evidence" value="ECO:0007669"/>
    <property type="project" value="UniProtKB-UniRule"/>
</dbReference>
<dbReference type="GO" id="GO:0140662">
    <property type="term" value="F:ATP-dependent protein folding chaperone"/>
    <property type="evidence" value="ECO:0007669"/>
    <property type="project" value="InterPro"/>
</dbReference>
<dbReference type="GO" id="GO:0016853">
    <property type="term" value="F:isomerase activity"/>
    <property type="evidence" value="ECO:0007669"/>
    <property type="project" value="UniProtKB-KW"/>
</dbReference>
<dbReference type="GO" id="GO:0051082">
    <property type="term" value="F:unfolded protein binding"/>
    <property type="evidence" value="ECO:0007669"/>
    <property type="project" value="UniProtKB-UniRule"/>
</dbReference>
<dbReference type="GO" id="GO:0042026">
    <property type="term" value="P:protein refolding"/>
    <property type="evidence" value="ECO:0007669"/>
    <property type="project" value="UniProtKB-UniRule"/>
</dbReference>
<dbReference type="CDD" id="cd03344">
    <property type="entry name" value="GroEL"/>
    <property type="match status" value="1"/>
</dbReference>
<dbReference type="FunFam" id="1.10.560.10:FF:000001">
    <property type="entry name" value="60 kDa chaperonin"/>
    <property type="match status" value="1"/>
</dbReference>
<dbReference type="FunFam" id="3.50.7.10:FF:000001">
    <property type="entry name" value="60 kDa chaperonin"/>
    <property type="match status" value="1"/>
</dbReference>
<dbReference type="Gene3D" id="3.50.7.10">
    <property type="entry name" value="GroEL"/>
    <property type="match status" value="1"/>
</dbReference>
<dbReference type="Gene3D" id="1.10.560.10">
    <property type="entry name" value="GroEL-like equatorial domain"/>
    <property type="match status" value="1"/>
</dbReference>
<dbReference type="Gene3D" id="3.30.260.10">
    <property type="entry name" value="TCP-1-like chaperonin intermediate domain"/>
    <property type="match status" value="1"/>
</dbReference>
<dbReference type="HAMAP" id="MF_00600">
    <property type="entry name" value="CH60"/>
    <property type="match status" value="1"/>
</dbReference>
<dbReference type="InterPro" id="IPR018370">
    <property type="entry name" value="Chaperonin_Cpn60_CS"/>
</dbReference>
<dbReference type="InterPro" id="IPR001844">
    <property type="entry name" value="Cpn60/GroEL"/>
</dbReference>
<dbReference type="InterPro" id="IPR002423">
    <property type="entry name" value="Cpn60/GroEL/TCP-1"/>
</dbReference>
<dbReference type="InterPro" id="IPR027409">
    <property type="entry name" value="GroEL-like_apical_dom_sf"/>
</dbReference>
<dbReference type="InterPro" id="IPR027413">
    <property type="entry name" value="GROEL-like_equatorial_sf"/>
</dbReference>
<dbReference type="InterPro" id="IPR027410">
    <property type="entry name" value="TCP-1-like_intermed_sf"/>
</dbReference>
<dbReference type="NCBIfam" id="TIGR02348">
    <property type="entry name" value="GroEL"/>
    <property type="match status" value="1"/>
</dbReference>
<dbReference type="NCBIfam" id="NF000592">
    <property type="entry name" value="PRK00013.1"/>
    <property type="match status" value="1"/>
</dbReference>
<dbReference type="NCBIfam" id="NF009487">
    <property type="entry name" value="PRK12849.1"/>
    <property type="match status" value="1"/>
</dbReference>
<dbReference type="NCBIfam" id="NF009488">
    <property type="entry name" value="PRK12850.1"/>
    <property type="match status" value="1"/>
</dbReference>
<dbReference type="NCBIfam" id="NF009489">
    <property type="entry name" value="PRK12851.1"/>
    <property type="match status" value="1"/>
</dbReference>
<dbReference type="PANTHER" id="PTHR45633">
    <property type="entry name" value="60 KDA HEAT SHOCK PROTEIN, MITOCHONDRIAL"/>
    <property type="match status" value="1"/>
</dbReference>
<dbReference type="Pfam" id="PF00118">
    <property type="entry name" value="Cpn60_TCP1"/>
    <property type="match status" value="1"/>
</dbReference>
<dbReference type="PRINTS" id="PR00298">
    <property type="entry name" value="CHAPERONIN60"/>
</dbReference>
<dbReference type="SUPFAM" id="SSF52029">
    <property type="entry name" value="GroEL apical domain-like"/>
    <property type="match status" value="1"/>
</dbReference>
<dbReference type="SUPFAM" id="SSF48592">
    <property type="entry name" value="GroEL equatorial domain-like"/>
    <property type="match status" value="1"/>
</dbReference>
<dbReference type="SUPFAM" id="SSF54849">
    <property type="entry name" value="GroEL-intermediate domain like"/>
    <property type="match status" value="1"/>
</dbReference>
<dbReference type="PROSITE" id="PS00296">
    <property type="entry name" value="CHAPERONINS_CPN60"/>
    <property type="match status" value="1"/>
</dbReference>
<protein>
    <recommendedName>
        <fullName evidence="1">Chaperonin GroEL</fullName>
        <ecNumber evidence="1">5.6.1.7</ecNumber>
    </recommendedName>
    <alternativeName>
        <fullName evidence="1">60 kDa chaperonin</fullName>
    </alternativeName>
    <alternativeName>
        <fullName evidence="1">Chaperonin-60</fullName>
        <shortName evidence="1">Cpn60</shortName>
    </alternativeName>
</protein>
<keyword id="KW-0067">ATP-binding</keyword>
<keyword id="KW-0143">Chaperone</keyword>
<keyword id="KW-0963">Cytoplasm</keyword>
<keyword id="KW-0903">Direct protein sequencing</keyword>
<keyword id="KW-0413">Isomerase</keyword>
<keyword id="KW-0547">Nucleotide-binding</keyword>
<comment type="function">
    <text evidence="1">Together with its co-chaperonin GroES, plays an essential role in assisting protein folding. The GroEL-GroES system forms a nano-cage that allows encapsulation of the non-native substrate proteins and provides a physical environment optimized to promote and accelerate protein folding.</text>
</comment>
<comment type="catalytic activity">
    <reaction evidence="1">
        <text>ATP + H2O + a folded polypeptide = ADP + phosphate + an unfolded polypeptide.</text>
        <dbReference type="EC" id="5.6.1.7"/>
    </reaction>
</comment>
<comment type="subunit">
    <text evidence="1">Forms a cylinder of 14 subunits composed of two heptameric rings stacked back-to-back. Interacts with the co-chaperonin GroES.</text>
</comment>
<comment type="subcellular location">
    <subcellularLocation>
        <location evidence="1">Cytoplasm</location>
    </subcellularLocation>
</comment>
<comment type="similarity">
    <text evidence="1">Belongs to the chaperonin (HSP60) family.</text>
</comment>